<gene>
    <name evidence="1" type="primary">rbcL</name>
</gene>
<organism>
    <name type="scientific">Morus rubra</name>
    <name type="common">Red mulberry</name>
    <dbReference type="NCBI Taxonomy" id="32202"/>
    <lineage>
        <taxon>Eukaryota</taxon>
        <taxon>Viridiplantae</taxon>
        <taxon>Streptophyta</taxon>
        <taxon>Embryophyta</taxon>
        <taxon>Tracheophyta</taxon>
        <taxon>Spermatophyta</taxon>
        <taxon>Magnoliopsida</taxon>
        <taxon>eudicotyledons</taxon>
        <taxon>Gunneridae</taxon>
        <taxon>Pentapetalae</taxon>
        <taxon>rosids</taxon>
        <taxon>fabids</taxon>
        <taxon>Rosales</taxon>
        <taxon>Moraceae</taxon>
        <taxon>Moreae</taxon>
        <taxon>Morus</taxon>
    </lineage>
</organism>
<keyword id="KW-0113">Calvin cycle</keyword>
<keyword id="KW-0120">Carbon dioxide fixation</keyword>
<keyword id="KW-0150">Chloroplast</keyword>
<keyword id="KW-1015">Disulfide bond</keyword>
<keyword id="KW-0456">Lyase</keyword>
<keyword id="KW-0460">Magnesium</keyword>
<keyword id="KW-0479">Metal-binding</keyword>
<keyword id="KW-0488">Methylation</keyword>
<keyword id="KW-0503">Monooxygenase</keyword>
<keyword id="KW-0560">Oxidoreductase</keyword>
<keyword id="KW-0601">Photorespiration</keyword>
<keyword id="KW-0602">Photosynthesis</keyword>
<keyword id="KW-0934">Plastid</keyword>
<proteinExistence type="inferred from homology"/>
<sequence length="465" mass="51607">VGFKAGVKDYKLTYYTPEYEVKDTDILAAFRVTPQPGVPPEEAGAAVAAESSTGTWTTVWTDGLTSLDRYKGRCYNIEPVAGEESQFIAYVAYPLDLFEEGSVTNMFTSIVGNVFGFKALRALRLEDLRIPNAYIKTFQGPPHGIQVERDKLNKYGRPLLGCTIKPKLGLSAKNYGRAVYECLRGGLDFTKDDENVNSQPFMRWRDRFLFCAEAIYKSQAETGEIKGHYLNATAGTCEEMMKRAVFARELGVPIVMHDYLTGGFTANTTLAHYCRDNGLLLHIHRAMHAVIDRQKNHGMHFRVLAKALRMSGGDHIHAGTVVGKLEGEREITLGFVDLLRDDFIEKDRSRGIYFTQDWVSLPGVLPVASGGIHVWHMPALTEIFGDDSVLQFGGGTLGHPWGNAPGAVANRVALEACVKARNEGRDLAVEGNEIIREASKWSPELAAACEVWKEIKFEFEAMDTL</sequence>
<name>RBL_MORRU</name>
<accession>Q32625</accession>
<comment type="function">
    <text evidence="1">RuBisCO catalyzes two reactions: the carboxylation of D-ribulose 1,5-bisphosphate, the primary event in carbon dioxide fixation, as well as the oxidative fragmentation of the pentose substrate in the photorespiration process. Both reactions occur simultaneously and in competition at the same active site.</text>
</comment>
<comment type="catalytic activity">
    <reaction evidence="1">
        <text>2 (2R)-3-phosphoglycerate + 2 H(+) = D-ribulose 1,5-bisphosphate + CO2 + H2O</text>
        <dbReference type="Rhea" id="RHEA:23124"/>
        <dbReference type="ChEBI" id="CHEBI:15377"/>
        <dbReference type="ChEBI" id="CHEBI:15378"/>
        <dbReference type="ChEBI" id="CHEBI:16526"/>
        <dbReference type="ChEBI" id="CHEBI:57870"/>
        <dbReference type="ChEBI" id="CHEBI:58272"/>
        <dbReference type="EC" id="4.1.1.39"/>
    </reaction>
</comment>
<comment type="catalytic activity">
    <reaction evidence="1">
        <text>D-ribulose 1,5-bisphosphate + O2 = 2-phosphoglycolate + (2R)-3-phosphoglycerate + 2 H(+)</text>
        <dbReference type="Rhea" id="RHEA:36631"/>
        <dbReference type="ChEBI" id="CHEBI:15378"/>
        <dbReference type="ChEBI" id="CHEBI:15379"/>
        <dbReference type="ChEBI" id="CHEBI:57870"/>
        <dbReference type="ChEBI" id="CHEBI:58033"/>
        <dbReference type="ChEBI" id="CHEBI:58272"/>
    </reaction>
</comment>
<comment type="cofactor">
    <cofactor evidence="1">
        <name>Mg(2+)</name>
        <dbReference type="ChEBI" id="CHEBI:18420"/>
    </cofactor>
    <text evidence="1">Binds 1 Mg(2+) ion per subunit.</text>
</comment>
<comment type="subunit">
    <text evidence="1">Heterohexadecamer of 8 large chains and 8 small chains; disulfide-linked. The disulfide link is formed within the large subunit homodimers.</text>
</comment>
<comment type="subcellular location">
    <subcellularLocation>
        <location>Plastid</location>
        <location>Chloroplast</location>
    </subcellularLocation>
</comment>
<comment type="PTM">
    <text evidence="1">The disulfide bond which can form in the large chain dimeric partners within the hexadecamer appears to be associated with oxidative stress and protein turnover.</text>
</comment>
<comment type="miscellaneous">
    <text evidence="1">The basic functional RuBisCO is composed of a large chain homodimer in a 'head-to-tail' conformation. In form I RuBisCO this homodimer is arranged in a barrel-like tetramer with the small subunits forming a tetrameric 'cap' on each end of the 'barrel'.</text>
</comment>
<comment type="similarity">
    <text evidence="1">Belongs to the RuBisCO large chain family. Type I subfamily.</text>
</comment>
<geneLocation type="chloroplast"/>
<feature type="chain" id="PRO_0000062534" description="Ribulose bisphosphate carboxylase large chain">
    <location>
        <begin position="1" status="less than"/>
        <end position="465"/>
    </location>
</feature>
<feature type="active site" description="Proton acceptor" evidence="1">
    <location>
        <position position="165"/>
    </location>
</feature>
<feature type="active site" description="Proton acceptor" evidence="1">
    <location>
        <position position="284"/>
    </location>
</feature>
<feature type="binding site" description="in homodimeric partner" evidence="1">
    <location>
        <position position="113"/>
    </location>
    <ligand>
        <name>substrate</name>
    </ligand>
</feature>
<feature type="binding site" evidence="1">
    <location>
        <position position="163"/>
    </location>
    <ligand>
        <name>substrate</name>
    </ligand>
</feature>
<feature type="binding site" evidence="1">
    <location>
        <position position="167"/>
    </location>
    <ligand>
        <name>substrate</name>
    </ligand>
</feature>
<feature type="binding site" description="via carbamate group" evidence="1">
    <location>
        <position position="191"/>
    </location>
    <ligand>
        <name>Mg(2+)</name>
        <dbReference type="ChEBI" id="CHEBI:18420"/>
    </ligand>
</feature>
<feature type="binding site" evidence="1">
    <location>
        <position position="193"/>
    </location>
    <ligand>
        <name>Mg(2+)</name>
        <dbReference type="ChEBI" id="CHEBI:18420"/>
    </ligand>
</feature>
<feature type="binding site" evidence="1">
    <location>
        <position position="194"/>
    </location>
    <ligand>
        <name>Mg(2+)</name>
        <dbReference type="ChEBI" id="CHEBI:18420"/>
    </ligand>
</feature>
<feature type="binding site" evidence="1">
    <location>
        <position position="285"/>
    </location>
    <ligand>
        <name>substrate</name>
    </ligand>
</feature>
<feature type="binding site" evidence="1">
    <location>
        <position position="317"/>
    </location>
    <ligand>
        <name>substrate</name>
    </ligand>
</feature>
<feature type="binding site" evidence="1">
    <location>
        <position position="369"/>
    </location>
    <ligand>
        <name>substrate</name>
    </ligand>
</feature>
<feature type="site" description="Transition state stabilizer" evidence="1">
    <location>
        <position position="324"/>
    </location>
</feature>
<feature type="modified residue" description="N6,N6,N6-trimethyllysine" evidence="1">
    <location>
        <position position="4"/>
    </location>
</feature>
<feature type="modified residue" description="N6-carboxylysine" evidence="1">
    <location>
        <position position="191"/>
    </location>
</feature>
<feature type="disulfide bond" description="Interchain; in linked form" evidence="1">
    <location>
        <position position="237"/>
    </location>
</feature>
<feature type="non-terminal residue">
    <location>
        <position position="1"/>
    </location>
</feature>
<protein>
    <recommendedName>
        <fullName evidence="1">Ribulose bisphosphate carboxylase large chain</fullName>
        <shortName evidence="1">RuBisCO large subunit</shortName>
        <ecNumber evidence="1">4.1.1.39</ecNumber>
    </recommendedName>
</protein>
<dbReference type="EC" id="4.1.1.39" evidence="1"/>
<dbReference type="EMBL" id="U06812">
    <property type="protein sequence ID" value="AAA21230.1"/>
    <property type="molecule type" value="Genomic_DNA"/>
</dbReference>
<dbReference type="SMR" id="Q32625"/>
<dbReference type="GO" id="GO:0009507">
    <property type="term" value="C:chloroplast"/>
    <property type="evidence" value="ECO:0007669"/>
    <property type="project" value="UniProtKB-SubCell"/>
</dbReference>
<dbReference type="GO" id="GO:0000287">
    <property type="term" value="F:magnesium ion binding"/>
    <property type="evidence" value="ECO:0007669"/>
    <property type="project" value="InterPro"/>
</dbReference>
<dbReference type="GO" id="GO:0004497">
    <property type="term" value="F:monooxygenase activity"/>
    <property type="evidence" value="ECO:0007669"/>
    <property type="project" value="UniProtKB-KW"/>
</dbReference>
<dbReference type="GO" id="GO:0016984">
    <property type="term" value="F:ribulose-bisphosphate carboxylase activity"/>
    <property type="evidence" value="ECO:0007669"/>
    <property type="project" value="UniProtKB-EC"/>
</dbReference>
<dbReference type="GO" id="GO:0009853">
    <property type="term" value="P:photorespiration"/>
    <property type="evidence" value="ECO:0007669"/>
    <property type="project" value="UniProtKB-KW"/>
</dbReference>
<dbReference type="GO" id="GO:0019253">
    <property type="term" value="P:reductive pentose-phosphate cycle"/>
    <property type="evidence" value="ECO:0007669"/>
    <property type="project" value="UniProtKB-KW"/>
</dbReference>
<dbReference type="CDD" id="cd08212">
    <property type="entry name" value="RuBisCO_large_I"/>
    <property type="match status" value="1"/>
</dbReference>
<dbReference type="FunFam" id="3.20.20.110:FF:000001">
    <property type="entry name" value="Ribulose bisphosphate carboxylase large chain"/>
    <property type="match status" value="1"/>
</dbReference>
<dbReference type="FunFam" id="3.30.70.150:FF:000001">
    <property type="entry name" value="Ribulose bisphosphate carboxylase large chain"/>
    <property type="match status" value="1"/>
</dbReference>
<dbReference type="Gene3D" id="3.20.20.110">
    <property type="entry name" value="Ribulose bisphosphate carboxylase, large subunit, C-terminal domain"/>
    <property type="match status" value="1"/>
</dbReference>
<dbReference type="Gene3D" id="3.30.70.150">
    <property type="entry name" value="RuBisCO large subunit, N-terminal domain"/>
    <property type="match status" value="1"/>
</dbReference>
<dbReference type="HAMAP" id="MF_01338">
    <property type="entry name" value="RuBisCO_L_type1"/>
    <property type="match status" value="1"/>
</dbReference>
<dbReference type="InterPro" id="IPR033966">
    <property type="entry name" value="RuBisCO"/>
</dbReference>
<dbReference type="InterPro" id="IPR020878">
    <property type="entry name" value="RuBisCo_large_chain_AS"/>
</dbReference>
<dbReference type="InterPro" id="IPR000685">
    <property type="entry name" value="RuBisCO_lsu_C"/>
</dbReference>
<dbReference type="InterPro" id="IPR036376">
    <property type="entry name" value="RuBisCO_lsu_C_sf"/>
</dbReference>
<dbReference type="InterPro" id="IPR017443">
    <property type="entry name" value="RuBisCO_lsu_fd_N"/>
</dbReference>
<dbReference type="InterPro" id="IPR036422">
    <property type="entry name" value="RuBisCO_lsu_N_sf"/>
</dbReference>
<dbReference type="InterPro" id="IPR020888">
    <property type="entry name" value="RuBisCO_lsuI"/>
</dbReference>
<dbReference type="NCBIfam" id="NF003252">
    <property type="entry name" value="PRK04208.1"/>
    <property type="match status" value="1"/>
</dbReference>
<dbReference type="PANTHER" id="PTHR42704">
    <property type="entry name" value="RIBULOSE BISPHOSPHATE CARBOXYLASE"/>
    <property type="match status" value="1"/>
</dbReference>
<dbReference type="PANTHER" id="PTHR42704:SF16">
    <property type="entry name" value="RIBULOSE BISPHOSPHATE CARBOXYLASE LARGE CHAIN"/>
    <property type="match status" value="1"/>
</dbReference>
<dbReference type="Pfam" id="PF00016">
    <property type="entry name" value="RuBisCO_large"/>
    <property type="match status" value="1"/>
</dbReference>
<dbReference type="Pfam" id="PF02788">
    <property type="entry name" value="RuBisCO_large_N"/>
    <property type="match status" value="1"/>
</dbReference>
<dbReference type="SFLD" id="SFLDG01052">
    <property type="entry name" value="RuBisCO"/>
    <property type="match status" value="1"/>
</dbReference>
<dbReference type="SFLD" id="SFLDS00014">
    <property type="entry name" value="RuBisCO"/>
    <property type="match status" value="1"/>
</dbReference>
<dbReference type="SFLD" id="SFLDG00301">
    <property type="entry name" value="RuBisCO-like_proteins"/>
    <property type="match status" value="1"/>
</dbReference>
<dbReference type="SUPFAM" id="SSF51649">
    <property type="entry name" value="RuBisCo, C-terminal domain"/>
    <property type="match status" value="1"/>
</dbReference>
<dbReference type="SUPFAM" id="SSF54966">
    <property type="entry name" value="RuBisCO, large subunit, small (N-terminal) domain"/>
    <property type="match status" value="1"/>
</dbReference>
<dbReference type="PROSITE" id="PS00157">
    <property type="entry name" value="RUBISCO_LARGE"/>
    <property type="match status" value="1"/>
</dbReference>
<evidence type="ECO:0000255" key="1">
    <source>
        <dbReference type="HAMAP-Rule" id="MF_01338"/>
    </source>
</evidence>
<reference key="1">
    <citation type="journal article" date="1994" name="Am. J. Bot.">
        <title>Systematic and evolutionary implications of rbcL sequence variation in Rosaceae.</title>
        <authorList>
            <person name="Morgan D.R."/>
            <person name="Soltis D.E."/>
            <person name="Robertson K.R."/>
        </authorList>
    </citation>
    <scope>NUCLEOTIDE SEQUENCE [GENOMIC DNA]</scope>
    <source>
        <tissue>Leaf</tissue>
    </source>
</reference>